<name>AMIF_BACCZ</name>
<proteinExistence type="inferred from homology"/>
<sequence length="332" mass="36808">MGSSGSMVKPISGFLTALIQYPVPVVESRADIDKQIKQIIKTIHSTKAGYPGLELIVFPEYSTQGLNTKKWTTEEFLCTVPGPETDLFAEACKESEVYGVFSIMERNPDGGEPYNTAIIIDPQGEMILKYRKLNPWVPVEPWKAGDLGLPVCDGPGGSKLAVCICHDGMFPEVAREAAYKGANVLIRISGYSTQVSEQWMLTNRSNAWQNLMYTLSVNLAGYDGVFYYFGEGQVCNFDGTTLVQGHRNPWEIVTAEVYPELADQARLGWGLENNIYNLGSRGYVATPGGVKENPYTFVKDLAEGKYKVPWEDEIKVKDGTIYGYPVKKTIHS</sequence>
<organism>
    <name type="scientific">Bacillus cereus (strain ZK / E33L)</name>
    <dbReference type="NCBI Taxonomy" id="288681"/>
    <lineage>
        <taxon>Bacteria</taxon>
        <taxon>Bacillati</taxon>
        <taxon>Bacillota</taxon>
        <taxon>Bacilli</taxon>
        <taxon>Bacillales</taxon>
        <taxon>Bacillaceae</taxon>
        <taxon>Bacillus</taxon>
        <taxon>Bacillus cereus group</taxon>
    </lineage>
</organism>
<keyword id="KW-0378">Hydrolase</keyword>
<protein>
    <recommendedName>
        <fullName evidence="1">Formamidase</fullName>
        <ecNumber evidence="1">3.5.1.49</ecNumber>
    </recommendedName>
    <alternativeName>
        <fullName evidence="1">Formamide amidohydrolase</fullName>
    </alternativeName>
</protein>
<dbReference type="EC" id="3.5.1.49" evidence="1"/>
<dbReference type="EMBL" id="CP000001">
    <property type="protein sequence ID" value="AAU16567.1"/>
    <property type="molecule type" value="Genomic_DNA"/>
</dbReference>
<dbReference type="RefSeq" id="WP_000535791.1">
    <property type="nucleotide sequence ID" value="NZ_CP009968.1"/>
</dbReference>
<dbReference type="SMR" id="Q635Y7"/>
<dbReference type="KEGG" id="bcz:BCE33L3699"/>
<dbReference type="PATRIC" id="fig|288681.22.peg.1713"/>
<dbReference type="Proteomes" id="UP000002612">
    <property type="component" value="Chromosome"/>
</dbReference>
<dbReference type="GO" id="GO:0004328">
    <property type="term" value="F:formamidase activity"/>
    <property type="evidence" value="ECO:0007669"/>
    <property type="project" value="UniProtKB-UniRule"/>
</dbReference>
<dbReference type="GO" id="GO:0050126">
    <property type="term" value="F:N-carbamoylputrescine amidase activity"/>
    <property type="evidence" value="ECO:0007669"/>
    <property type="project" value="TreeGrafter"/>
</dbReference>
<dbReference type="GO" id="GO:0033388">
    <property type="term" value="P:putrescine biosynthetic process from arginine"/>
    <property type="evidence" value="ECO:0007669"/>
    <property type="project" value="TreeGrafter"/>
</dbReference>
<dbReference type="CDD" id="cd07565">
    <property type="entry name" value="aliphatic_amidase"/>
    <property type="match status" value="1"/>
</dbReference>
<dbReference type="Gene3D" id="3.60.110.10">
    <property type="entry name" value="Carbon-nitrogen hydrolase"/>
    <property type="match status" value="1"/>
</dbReference>
<dbReference type="HAMAP" id="MF_01243">
    <property type="entry name" value="Formamidase"/>
    <property type="match status" value="1"/>
</dbReference>
<dbReference type="InterPro" id="IPR050345">
    <property type="entry name" value="Aliph_Amidase/BUP"/>
</dbReference>
<dbReference type="InterPro" id="IPR003010">
    <property type="entry name" value="C-N_Hydrolase"/>
</dbReference>
<dbReference type="InterPro" id="IPR036526">
    <property type="entry name" value="C-N_Hydrolase_sf"/>
</dbReference>
<dbReference type="InterPro" id="IPR022843">
    <property type="entry name" value="Formamidase"/>
</dbReference>
<dbReference type="NCBIfam" id="NF009803">
    <property type="entry name" value="PRK13287.1"/>
    <property type="match status" value="1"/>
</dbReference>
<dbReference type="PANTHER" id="PTHR43674:SF15">
    <property type="entry name" value="FORMAMIDASE"/>
    <property type="match status" value="1"/>
</dbReference>
<dbReference type="PANTHER" id="PTHR43674">
    <property type="entry name" value="NITRILASE C965.09-RELATED"/>
    <property type="match status" value="1"/>
</dbReference>
<dbReference type="Pfam" id="PF00795">
    <property type="entry name" value="CN_hydrolase"/>
    <property type="match status" value="1"/>
</dbReference>
<dbReference type="SUPFAM" id="SSF56317">
    <property type="entry name" value="Carbon-nitrogen hydrolase"/>
    <property type="match status" value="1"/>
</dbReference>
<dbReference type="PROSITE" id="PS50263">
    <property type="entry name" value="CN_HYDROLASE"/>
    <property type="match status" value="1"/>
</dbReference>
<evidence type="ECO:0000255" key="1">
    <source>
        <dbReference type="HAMAP-Rule" id="MF_01243"/>
    </source>
</evidence>
<evidence type="ECO:0000255" key="2">
    <source>
        <dbReference type="PROSITE-ProRule" id="PRU00054"/>
    </source>
</evidence>
<feature type="chain" id="PRO_1000067055" description="Formamidase">
    <location>
        <begin position="1"/>
        <end position="332"/>
    </location>
</feature>
<feature type="domain" description="CN hydrolase" evidence="2">
    <location>
        <begin position="14"/>
        <end position="259"/>
    </location>
</feature>
<feature type="active site" description="Proton acceptor" evidence="1">
    <location>
        <position position="60"/>
    </location>
</feature>
<feature type="active site" description="Proton donor" evidence="1">
    <location>
        <position position="132"/>
    </location>
</feature>
<feature type="active site" description="Nucleophile" evidence="1">
    <location>
        <position position="165"/>
    </location>
</feature>
<accession>Q635Y7</accession>
<gene>
    <name evidence="1" type="primary">amiF</name>
    <name type="ordered locus">BCE33L3699</name>
</gene>
<comment type="function">
    <text evidence="1">Is an aliphatic amidase with a restricted substrate specificity, as it only hydrolyzes formamide.</text>
</comment>
<comment type="catalytic activity">
    <reaction evidence="1">
        <text>formamide + H2O = formate + NH4(+)</text>
        <dbReference type="Rhea" id="RHEA:21948"/>
        <dbReference type="ChEBI" id="CHEBI:15377"/>
        <dbReference type="ChEBI" id="CHEBI:15740"/>
        <dbReference type="ChEBI" id="CHEBI:16397"/>
        <dbReference type="ChEBI" id="CHEBI:28938"/>
        <dbReference type="EC" id="3.5.1.49"/>
    </reaction>
</comment>
<comment type="similarity">
    <text evidence="1">Belongs to the carbon-nitrogen hydrolase superfamily. Aliphatic amidase family.</text>
</comment>
<reference key="1">
    <citation type="journal article" date="2006" name="J. Bacteriol.">
        <title>Pathogenomic sequence analysis of Bacillus cereus and Bacillus thuringiensis isolates closely related to Bacillus anthracis.</title>
        <authorList>
            <person name="Han C.S."/>
            <person name="Xie G."/>
            <person name="Challacombe J.F."/>
            <person name="Altherr M.R."/>
            <person name="Bhotika S.S."/>
            <person name="Bruce D."/>
            <person name="Campbell C.S."/>
            <person name="Campbell M.L."/>
            <person name="Chen J."/>
            <person name="Chertkov O."/>
            <person name="Cleland C."/>
            <person name="Dimitrijevic M."/>
            <person name="Doggett N.A."/>
            <person name="Fawcett J.J."/>
            <person name="Glavina T."/>
            <person name="Goodwin L.A."/>
            <person name="Hill K.K."/>
            <person name="Hitchcock P."/>
            <person name="Jackson P.J."/>
            <person name="Keim P."/>
            <person name="Kewalramani A.R."/>
            <person name="Longmire J."/>
            <person name="Lucas S."/>
            <person name="Malfatti S."/>
            <person name="McMurry K."/>
            <person name="Meincke L.J."/>
            <person name="Misra M."/>
            <person name="Moseman B.L."/>
            <person name="Mundt M."/>
            <person name="Munk A.C."/>
            <person name="Okinaka R.T."/>
            <person name="Parson-Quintana B."/>
            <person name="Reilly L.P."/>
            <person name="Richardson P."/>
            <person name="Robinson D.L."/>
            <person name="Rubin E."/>
            <person name="Saunders E."/>
            <person name="Tapia R."/>
            <person name="Tesmer J.G."/>
            <person name="Thayer N."/>
            <person name="Thompson L.S."/>
            <person name="Tice H."/>
            <person name="Ticknor L.O."/>
            <person name="Wills P.L."/>
            <person name="Brettin T.S."/>
            <person name="Gilna P."/>
        </authorList>
    </citation>
    <scope>NUCLEOTIDE SEQUENCE [LARGE SCALE GENOMIC DNA]</scope>
    <source>
        <strain>ZK / E33L</strain>
    </source>
</reference>